<reference key="1">
    <citation type="journal article" date="1997" name="J. Virol.">
        <title>Primary structure of the alcelaphine herpesvirus 1 genome.</title>
        <authorList>
            <person name="Ensser A."/>
            <person name="Pflanz R."/>
            <person name="Fleckenstein B."/>
        </authorList>
    </citation>
    <scope>NUCLEOTIDE SEQUENCE [LARGE SCALE GENOMIC DNA]</scope>
</reference>
<comment type="function">
    <text evidence="1">Structural component of the T=16 icosahedral capsid. The capsid is composed of pentamers and hexamers of major capsid protein/MCP, which are linked together by heterotrimers called triplexes. These triplexes are formed by a single molecule of triplex protein 1/TRX1 and two copies of triplex protein 2/TRX2. Additionally, TRX1 is required for efficient transport of TRX2 to the nucleus, which is the site of capsid assembly.</text>
</comment>
<comment type="subunit">
    <text evidence="1">Interacts with TRX1 and major capisd protein/MCP.</text>
</comment>
<comment type="subcellular location">
    <subcellularLocation>
        <location evidence="1">Virion</location>
    </subcellularLocation>
    <subcellularLocation>
        <location evidence="1">Host nucleus</location>
    </subcellularLocation>
</comment>
<comment type="similarity">
    <text evidence="1">Belongs to the herpesviridae TRX2 protein family.</text>
</comment>
<proteinExistence type="inferred from homology"/>
<dbReference type="EMBL" id="AF005370">
    <property type="protein sequence ID" value="AAC58073.1"/>
    <property type="molecule type" value="Genomic_DNA"/>
</dbReference>
<dbReference type="PIR" id="T03121">
    <property type="entry name" value="T03121"/>
</dbReference>
<dbReference type="RefSeq" id="NP_065525.1">
    <property type="nucleotide sequence ID" value="NC_002531.1"/>
</dbReference>
<dbReference type="SMR" id="O36376"/>
<dbReference type="KEGG" id="vg:911742"/>
<dbReference type="Proteomes" id="UP000000941">
    <property type="component" value="Segment"/>
</dbReference>
<dbReference type="GO" id="GO:0042025">
    <property type="term" value="C:host cell nucleus"/>
    <property type="evidence" value="ECO:0007669"/>
    <property type="project" value="UniProtKB-SubCell"/>
</dbReference>
<dbReference type="GO" id="GO:0019028">
    <property type="term" value="C:viral capsid"/>
    <property type="evidence" value="ECO:0007669"/>
    <property type="project" value="UniProtKB-KW"/>
</dbReference>
<dbReference type="GO" id="GO:0005198">
    <property type="term" value="F:structural molecule activity"/>
    <property type="evidence" value="ECO:0007669"/>
    <property type="project" value="InterPro"/>
</dbReference>
<dbReference type="HAMAP" id="MF_04019">
    <property type="entry name" value="HSV_TRX2"/>
    <property type="match status" value="1"/>
</dbReference>
<dbReference type="InterPro" id="IPR002690">
    <property type="entry name" value="Herpes_capsid_2"/>
</dbReference>
<dbReference type="Pfam" id="PF01802">
    <property type="entry name" value="Herpes_V23"/>
    <property type="match status" value="1"/>
</dbReference>
<gene>
    <name evidence="1" type="primary">TRX2</name>
    <name type="ordered locus">26</name>
</gene>
<feature type="chain" id="PRO_0000405772" description="Triplex capsid protein 2">
    <location>
        <begin position="1"/>
        <end position="306"/>
    </location>
</feature>
<keyword id="KW-0167">Capsid protein</keyword>
<keyword id="KW-1048">Host nucleus</keyword>
<keyword id="KW-1185">Reference proteome</keyword>
<keyword id="KW-0946">Virion</keyword>
<name>TRX2_ALHV1</name>
<protein>
    <recommendedName>
        <fullName evidence="1">Triplex capsid protein 2</fullName>
    </recommendedName>
</protein>
<organism>
    <name type="scientific">Alcelaphine herpesvirus 1 (strain C500)</name>
    <name type="common">AlHV-1</name>
    <name type="synonym">Malignant catarrhal fever virus</name>
    <dbReference type="NCBI Taxonomy" id="654901"/>
    <lineage>
        <taxon>Viruses</taxon>
        <taxon>Duplodnaviria</taxon>
        <taxon>Heunggongvirae</taxon>
        <taxon>Peploviricota</taxon>
        <taxon>Herviviricetes</taxon>
        <taxon>Herpesvirales</taxon>
        <taxon>Orthoherpesviridae</taxon>
        <taxon>Gammaherpesvirinae</taxon>
        <taxon>Macavirus</taxon>
        <taxon>Macavirus alcelaphinegamma1</taxon>
    </lineage>
</organism>
<sequence>MAVDSKIVVSCTSRLFTDEVCKLQEKVGCIVPLRDSHGSQNLQTVGLKPALGIDLGSDYVLMCNYLSTCTLAILEEVTTDSLVLTKISRNGTYQIKNKYHPFFQWDSNIQVCVMPPLFDQESNSVDLQSNNFTLLLPIVVPCEVAHEALQKVLTYNIYLRVTQAEPNAARMADVLAQTNYVTYLGNHYSLNLEGMESLGALAFLDNLATYLCIMVGLLPRACVRLLTTLLRHGENELLNVFRRMIPDEFNAAAANLNADTVYPDMTKIGLLITYLQTLGSIFNLSPRLQVSTYTPENLSATCWYVC</sequence>
<accession>O36376</accession>
<evidence type="ECO:0000255" key="1">
    <source>
        <dbReference type="HAMAP-Rule" id="MF_04019"/>
    </source>
</evidence>
<organismHost>
    <name type="scientific">Connochaetes taurinus</name>
    <name type="common">Blue wildebeest</name>
    <dbReference type="NCBI Taxonomy" id="9927"/>
</organismHost>